<evidence type="ECO:0000255" key="1">
    <source>
        <dbReference type="HAMAP-Rule" id="MF_01232"/>
    </source>
</evidence>
<evidence type="ECO:0000256" key="2">
    <source>
        <dbReference type="SAM" id="MobiDB-lite"/>
    </source>
</evidence>
<reference key="1">
    <citation type="journal article" date="2006" name="Nat. Biotechnol.">
        <title>Complete genome sequence of the entomopathogenic and metabolically versatile soil bacterium Pseudomonas entomophila.</title>
        <authorList>
            <person name="Vodovar N."/>
            <person name="Vallenet D."/>
            <person name="Cruveiller S."/>
            <person name="Rouy Z."/>
            <person name="Barbe V."/>
            <person name="Acosta C."/>
            <person name="Cattolico L."/>
            <person name="Jubin C."/>
            <person name="Lajus A."/>
            <person name="Segurens B."/>
            <person name="Vacherie B."/>
            <person name="Wincker P."/>
            <person name="Weissenbach J."/>
            <person name="Lemaitre B."/>
            <person name="Medigue C."/>
            <person name="Boccard F."/>
        </authorList>
    </citation>
    <scope>NUCLEOTIDE SEQUENCE [LARGE SCALE GENOMIC DNA]</scope>
    <source>
        <strain>L48</strain>
    </source>
</reference>
<accession>Q1IG25</accession>
<dbReference type="EMBL" id="CT573326">
    <property type="protein sequence ID" value="CAK13377.1"/>
    <property type="molecule type" value="Genomic_DNA"/>
</dbReference>
<dbReference type="RefSeq" id="WP_011531834.1">
    <property type="nucleotide sequence ID" value="NC_008027.1"/>
</dbReference>
<dbReference type="SMR" id="Q1IG25"/>
<dbReference type="STRING" id="384676.PSEEN0423"/>
<dbReference type="GeneID" id="32803758"/>
<dbReference type="KEGG" id="pen:PSEEN0423"/>
<dbReference type="eggNOG" id="COG2718">
    <property type="taxonomic scope" value="Bacteria"/>
</dbReference>
<dbReference type="HOGENOM" id="CLU_049702_0_0_6"/>
<dbReference type="OrthoDB" id="9788289at2"/>
<dbReference type="Proteomes" id="UP000000658">
    <property type="component" value="Chromosome"/>
</dbReference>
<dbReference type="HAMAP" id="MF_01232">
    <property type="entry name" value="UPF0229"/>
    <property type="match status" value="1"/>
</dbReference>
<dbReference type="InterPro" id="IPR006698">
    <property type="entry name" value="UPF0229"/>
</dbReference>
<dbReference type="InterPro" id="IPR036465">
    <property type="entry name" value="vWFA_dom_sf"/>
</dbReference>
<dbReference type="NCBIfam" id="NF003707">
    <property type="entry name" value="PRK05325.1-2"/>
    <property type="match status" value="1"/>
</dbReference>
<dbReference type="NCBIfam" id="NF003708">
    <property type="entry name" value="PRK05325.1-3"/>
    <property type="match status" value="1"/>
</dbReference>
<dbReference type="PANTHER" id="PTHR30510">
    <property type="entry name" value="UPF0229 PROTEIN YEAH"/>
    <property type="match status" value="1"/>
</dbReference>
<dbReference type="PANTHER" id="PTHR30510:SF2">
    <property type="entry name" value="UPF0229 PROTEIN YEAH"/>
    <property type="match status" value="1"/>
</dbReference>
<dbReference type="Pfam" id="PF04285">
    <property type="entry name" value="DUF444"/>
    <property type="match status" value="1"/>
</dbReference>
<dbReference type="SUPFAM" id="SSF53300">
    <property type="entry name" value="vWA-like"/>
    <property type="match status" value="1"/>
</dbReference>
<name>Y423_PSEE4</name>
<proteinExistence type="inferred from homology"/>
<protein>
    <recommendedName>
        <fullName evidence="1">UPF0229 protein PSEEN0423</fullName>
    </recommendedName>
</protein>
<feature type="chain" id="PRO_1000066870" description="UPF0229 protein PSEEN0423">
    <location>
        <begin position="1"/>
        <end position="423"/>
    </location>
</feature>
<feature type="region of interest" description="Disordered" evidence="2">
    <location>
        <begin position="85"/>
        <end position="107"/>
    </location>
</feature>
<feature type="compositionally biased region" description="Gly residues" evidence="2">
    <location>
        <begin position="92"/>
        <end position="107"/>
    </location>
</feature>
<organism>
    <name type="scientific">Pseudomonas entomophila (strain L48)</name>
    <dbReference type="NCBI Taxonomy" id="384676"/>
    <lineage>
        <taxon>Bacteria</taxon>
        <taxon>Pseudomonadati</taxon>
        <taxon>Pseudomonadota</taxon>
        <taxon>Gammaproteobacteria</taxon>
        <taxon>Pseudomonadales</taxon>
        <taxon>Pseudomonadaceae</taxon>
        <taxon>Pseudomonas</taxon>
    </lineage>
</organism>
<comment type="similarity">
    <text evidence="1">Belongs to the UPF0229 family.</text>
</comment>
<sequence length="423" mass="48746">MSYVIDRRLNGKNKSTVNRQRFLRRYREHIKKAVEEAVSRRSIMDMEHGEQISIPGRDIDEPVLHHGRGGKQTIVHPGNKEFTAGEHIARPQGGGGGGGRGKAGNSGEGMDDFVFQITQEEFLEFMFEDLELPNLVKRHLTGTDTFKTVRAGIANEGNPSRINIVRTLRSAHARRIALTGSSRALLREAQKELERLKVEEPDNFTDIRETEIEIERLKARINRLPFLDTFDLKYNLLIKQPNPSSKAVMFCLMDVSGSMTQATKDIAKRFFILLYLFLKRNYDRIEVVFIRHHTSAREVDEEEFFYSRETGGTIVSSALKMMQEIMADRYPASDWNIYAAQASDGDNWNDDSPICRDILANQIMPHVQYYTYVEITPREHQALWYEYERIGEAYPDTFAQQQLVSAGDIYPVFRELFQRRLAT</sequence>
<gene>
    <name type="ordered locus">PSEEN0423</name>
</gene>